<comment type="function">
    <text evidence="1">Acts in the nervous system to mediate the control of copulatory organs during courtship.</text>
</comment>
<comment type="subcellular location">
    <subcellularLocation>
        <location evidence="1">Cytoplasm</location>
    </subcellularLocation>
</comment>
<accession>Q7PMS9</accession>
<proteinExistence type="inferred from homology"/>
<protein>
    <recommendedName>
        <fullName>Protein lingerer</fullName>
    </recommendedName>
</protein>
<evidence type="ECO:0000250" key="1">
    <source>
        <dbReference type="UniProtKB" id="Q86S05"/>
    </source>
</evidence>
<evidence type="ECO:0000255" key="2"/>
<evidence type="ECO:0000256" key="3">
    <source>
        <dbReference type="SAM" id="MobiDB-lite"/>
    </source>
</evidence>
<organism>
    <name type="scientific">Anopheles gambiae</name>
    <name type="common">African malaria mosquito</name>
    <dbReference type="NCBI Taxonomy" id="7165"/>
    <lineage>
        <taxon>Eukaryota</taxon>
        <taxon>Metazoa</taxon>
        <taxon>Ecdysozoa</taxon>
        <taxon>Arthropoda</taxon>
        <taxon>Hexapoda</taxon>
        <taxon>Insecta</taxon>
        <taxon>Pterygota</taxon>
        <taxon>Neoptera</taxon>
        <taxon>Endopterygota</taxon>
        <taxon>Diptera</taxon>
        <taxon>Nematocera</taxon>
        <taxon>Culicoidea</taxon>
        <taxon>Culicidae</taxon>
        <taxon>Anophelinae</taxon>
        <taxon>Anopheles</taxon>
    </lineage>
</organism>
<feature type="chain" id="PRO_0000314620" description="Protein lingerer">
    <location>
        <begin position="1"/>
        <end position="1249"/>
    </location>
</feature>
<feature type="domain" description="UBA" evidence="2">
    <location>
        <begin position="84"/>
        <end position="124"/>
    </location>
</feature>
<feature type="region of interest" description="Disordered" evidence="3">
    <location>
        <begin position="1"/>
        <end position="66"/>
    </location>
</feature>
<feature type="region of interest" description="Disordered" evidence="3">
    <location>
        <begin position="132"/>
        <end position="312"/>
    </location>
</feature>
<feature type="region of interest" description="Disordered" evidence="3">
    <location>
        <begin position="350"/>
        <end position="375"/>
    </location>
</feature>
<feature type="region of interest" description="Disordered" evidence="3">
    <location>
        <begin position="454"/>
        <end position="506"/>
    </location>
</feature>
<feature type="region of interest" description="Disordered" evidence="3">
    <location>
        <begin position="549"/>
        <end position="579"/>
    </location>
</feature>
<feature type="region of interest" description="Disordered" evidence="3">
    <location>
        <begin position="616"/>
        <end position="717"/>
    </location>
</feature>
<feature type="region of interest" description="Disordered" evidence="3">
    <location>
        <begin position="738"/>
        <end position="922"/>
    </location>
</feature>
<feature type="region of interest" description="Disordered" evidence="3">
    <location>
        <begin position="1016"/>
        <end position="1042"/>
    </location>
</feature>
<feature type="region of interest" description="Disordered" evidence="3">
    <location>
        <begin position="1124"/>
        <end position="1149"/>
    </location>
</feature>
<feature type="region of interest" description="Disordered" evidence="3">
    <location>
        <begin position="1164"/>
        <end position="1186"/>
    </location>
</feature>
<feature type="region of interest" description="Disordered" evidence="3">
    <location>
        <begin position="1211"/>
        <end position="1249"/>
    </location>
</feature>
<feature type="compositionally biased region" description="Gly residues" evidence="3">
    <location>
        <begin position="7"/>
        <end position="30"/>
    </location>
</feature>
<feature type="compositionally biased region" description="Gly residues" evidence="3">
    <location>
        <begin position="38"/>
        <end position="50"/>
    </location>
</feature>
<feature type="compositionally biased region" description="Gly residues" evidence="3">
    <location>
        <begin position="186"/>
        <end position="209"/>
    </location>
</feature>
<feature type="compositionally biased region" description="Basic and acidic residues" evidence="3">
    <location>
        <begin position="210"/>
        <end position="227"/>
    </location>
</feature>
<feature type="compositionally biased region" description="Gly residues" evidence="3">
    <location>
        <begin position="228"/>
        <end position="240"/>
    </location>
</feature>
<feature type="compositionally biased region" description="Gly residues" evidence="3">
    <location>
        <begin position="248"/>
        <end position="269"/>
    </location>
</feature>
<feature type="compositionally biased region" description="Low complexity" evidence="3">
    <location>
        <begin position="350"/>
        <end position="369"/>
    </location>
</feature>
<feature type="compositionally biased region" description="Polar residues" evidence="3">
    <location>
        <begin position="457"/>
        <end position="494"/>
    </location>
</feature>
<feature type="compositionally biased region" description="Low complexity" evidence="3">
    <location>
        <begin position="549"/>
        <end position="559"/>
    </location>
</feature>
<feature type="compositionally biased region" description="Low complexity" evidence="3">
    <location>
        <begin position="616"/>
        <end position="639"/>
    </location>
</feature>
<feature type="compositionally biased region" description="Low complexity" evidence="3">
    <location>
        <begin position="647"/>
        <end position="664"/>
    </location>
</feature>
<feature type="compositionally biased region" description="Polar residues" evidence="3">
    <location>
        <begin position="678"/>
        <end position="705"/>
    </location>
</feature>
<feature type="compositionally biased region" description="Low complexity" evidence="3">
    <location>
        <begin position="706"/>
        <end position="717"/>
    </location>
</feature>
<feature type="compositionally biased region" description="Polar residues" evidence="3">
    <location>
        <begin position="738"/>
        <end position="769"/>
    </location>
</feature>
<feature type="compositionally biased region" description="Polar residues" evidence="3">
    <location>
        <begin position="777"/>
        <end position="809"/>
    </location>
</feature>
<feature type="compositionally biased region" description="Low complexity" evidence="3">
    <location>
        <begin position="811"/>
        <end position="861"/>
    </location>
</feature>
<feature type="compositionally biased region" description="Polar residues" evidence="3">
    <location>
        <begin position="862"/>
        <end position="873"/>
    </location>
</feature>
<feature type="compositionally biased region" description="Low complexity" evidence="3">
    <location>
        <begin position="874"/>
        <end position="884"/>
    </location>
</feature>
<feature type="compositionally biased region" description="Low complexity" evidence="3">
    <location>
        <begin position="892"/>
        <end position="922"/>
    </location>
</feature>
<feature type="compositionally biased region" description="Low complexity" evidence="3">
    <location>
        <begin position="1023"/>
        <end position="1034"/>
    </location>
</feature>
<feature type="compositionally biased region" description="Polar residues" evidence="3">
    <location>
        <begin position="1124"/>
        <end position="1138"/>
    </location>
</feature>
<feature type="compositionally biased region" description="Polar residues" evidence="3">
    <location>
        <begin position="1216"/>
        <end position="1249"/>
    </location>
</feature>
<keyword id="KW-0085">Behavior</keyword>
<keyword id="KW-0963">Cytoplasm</keyword>
<keyword id="KW-0597">Phosphoprotein</keyword>
<keyword id="KW-1185">Reference proteome</keyword>
<sequence>MSTQTRSGGGGGGGGRNKEAGGGSGGGAAGGNNEKSGGSTGAASGAGAGGASATHTVVKAKQPTAEQIRIAQITDIKSGMDDPKIQEKIQSLMETTQRSEEEVCCALQECDSDLDRAVIFLLETLPVGAFATTSKKKKSKSQAAAQKDGEDGGDWETTGPTTVGGASVQLGGINVDLKEQQRRGGNRGGSGNQRSGGPGRGGRAGGYRDGGGDRDRDRDRNGYDKGGEGGGYRNRAGGDGGRMRGGRDGPGGPGRGNYGSRGGRGGGPRLGTRGPGSRDQNRGSRMMNNDHQEIDSWDPVTTPANANDLKPEDCTAFTDTWGDWDNEEYTGTLADTKGYAGAVASTTAPSAGAGAQQQQSQQSTQTGVPPAASNVTELAAPPGLEQQVLNPPPPKDTELVQQYSTTVVSSTATAAVAAGGATGVASVVPQYSDLHAGTPNATTAAQHLRQALDMPPMNTSSSLSAEQSQYFSTLSSQNSNLQPTPSAVGFQQQPPAGVVASQPPTTVVPAVQQQQQPPQPNSVQYPTAFVGATSDATAAAAAAGAPTSYAAAATQQPPVRRQRARVPPPSKIPSSAVEMPGDNMNNIGYLDVQFGGLDFGADDSFDAVVSDKFNSTTGTAGSSTVQQQQQGAQVPPATVGVQPPAPQSQLQQQQQQVVSQAPQQTPKPSNLPGAPGLASSQIMPGQGTTEALSSQNDGLANSYSRTNASGSVSTSVSAGVNSMSNAAAALDQLTKSDPYGQSASTNTALTGGYQNAPYSSTQANKTASYPPTGAPQGYNNMSYSNNQVTNAYPPSTNNYSSYNQGNVNAYQPPSSSVTNNVVPNNNTGNSVGGVSNQSNLPVNNNAVNSSSNNNAGGYLSSQYPVSQTSSAFPSQQNYQNSSQNVYGNTGLNSNTGVASSTVSNSSTNNSNNNVTSSSSLPISSVVSTTTKSSSTTSGTSVVTNLPMVNPYIQAPGLPFYQQAAVYSYEDLQLMQQRMPHVPGFYDINYQTPTSLGAAGVRDANLGSVAYSTMSDGRFTRTDNNSSPVSNVPSSLSQQTGSGGPMLNLPYAYFYGGNMMPASGFQYGTPVYPQQMPTNAATSGGQFQKPAYNTGGYGSATGYDTLGQSGQDYNKNAYQASIVGQQQSKGQTVANQQSGSGSGSDMAPSMYGKNHVAINKVNYDKQSFHSGTPPPYNIAGTQTAGTTSAQPYGQHLAYIPTMATHHNINMHQNMHQDSNSSGQRPQNNNQGKTASKQQGYSASTYWTGPN</sequence>
<name>LIG_ANOGA</name>
<reference key="1">
    <citation type="journal article" date="2002" name="Science">
        <title>The genome sequence of the malaria mosquito Anopheles gambiae.</title>
        <authorList>
            <person name="Holt R.A."/>
            <person name="Subramanian G.M."/>
            <person name="Halpern A."/>
            <person name="Sutton G.G."/>
            <person name="Charlab R."/>
            <person name="Nusskern D.R."/>
            <person name="Wincker P."/>
            <person name="Clark A.G."/>
            <person name="Ribeiro J.M.C."/>
            <person name="Wides R."/>
            <person name="Salzberg S.L."/>
            <person name="Loftus B.J."/>
            <person name="Yandell M.D."/>
            <person name="Majoros W.H."/>
            <person name="Rusch D.B."/>
            <person name="Lai Z."/>
            <person name="Kraft C.L."/>
            <person name="Abril J.F."/>
            <person name="Anthouard V."/>
            <person name="Arensburger P."/>
            <person name="Atkinson P.W."/>
            <person name="Baden H."/>
            <person name="de Berardinis V."/>
            <person name="Baldwin D."/>
            <person name="Benes V."/>
            <person name="Biedler J."/>
            <person name="Blass C."/>
            <person name="Bolanos R."/>
            <person name="Boscus D."/>
            <person name="Barnstead M."/>
            <person name="Cai S."/>
            <person name="Center A."/>
            <person name="Chaturverdi K."/>
            <person name="Christophides G.K."/>
            <person name="Chrystal M.A.M."/>
            <person name="Clamp M."/>
            <person name="Cravchik A."/>
            <person name="Curwen V."/>
            <person name="Dana A."/>
            <person name="Delcher A."/>
            <person name="Dew I."/>
            <person name="Evans C.A."/>
            <person name="Flanigan M."/>
            <person name="Grundschober-Freimoser A."/>
            <person name="Friedli L."/>
            <person name="Gu Z."/>
            <person name="Guan P."/>
            <person name="Guigo R."/>
            <person name="Hillenmeyer M.E."/>
            <person name="Hladun S.L."/>
            <person name="Hogan J.R."/>
            <person name="Hong Y.S."/>
            <person name="Hoover J."/>
            <person name="Jaillon O."/>
            <person name="Ke Z."/>
            <person name="Kodira C.D."/>
            <person name="Kokoza E."/>
            <person name="Koutsos A."/>
            <person name="Letunic I."/>
            <person name="Levitsky A.A."/>
            <person name="Liang Y."/>
            <person name="Lin J.-J."/>
            <person name="Lobo N.F."/>
            <person name="Lopez J.R."/>
            <person name="Malek J.A."/>
            <person name="McIntosh T.C."/>
            <person name="Meister S."/>
            <person name="Miller J.R."/>
            <person name="Mobarry C."/>
            <person name="Mongin E."/>
            <person name="Murphy S.D."/>
            <person name="O'Brochta D.A."/>
            <person name="Pfannkoch C."/>
            <person name="Qi R."/>
            <person name="Regier M.A."/>
            <person name="Remington K."/>
            <person name="Shao H."/>
            <person name="Sharakhova M.V."/>
            <person name="Sitter C.D."/>
            <person name="Shetty J."/>
            <person name="Smith T.J."/>
            <person name="Strong R."/>
            <person name="Sun J."/>
            <person name="Thomasova D."/>
            <person name="Ton L.Q."/>
            <person name="Topalis P."/>
            <person name="Tu Z.J."/>
            <person name="Unger M.F."/>
            <person name="Walenz B."/>
            <person name="Wang A.H."/>
            <person name="Wang J."/>
            <person name="Wang M."/>
            <person name="Wang X."/>
            <person name="Woodford K.J."/>
            <person name="Wortman J.R."/>
            <person name="Wu M."/>
            <person name="Yao A."/>
            <person name="Zdobnov E.M."/>
            <person name="Zhang H."/>
            <person name="Zhao Q."/>
            <person name="Zhao S."/>
            <person name="Zhu S.C."/>
            <person name="Zhimulev I."/>
            <person name="Coluzzi M."/>
            <person name="della Torre A."/>
            <person name="Roth C.W."/>
            <person name="Louis C."/>
            <person name="Kalush F."/>
            <person name="Mural R.J."/>
            <person name="Myers E.W."/>
            <person name="Adams M.D."/>
            <person name="Smith H.O."/>
            <person name="Broder S."/>
            <person name="Gardner M.J."/>
            <person name="Fraser C.M."/>
            <person name="Birney E."/>
            <person name="Bork P."/>
            <person name="Brey P.T."/>
            <person name="Venter J.C."/>
            <person name="Weissenbach J."/>
            <person name="Kafatos F.C."/>
            <person name="Collins F.H."/>
            <person name="Hoffman S.L."/>
        </authorList>
    </citation>
    <scope>NUCLEOTIDE SEQUENCE [LARGE SCALE GENOMIC DNA]</scope>
    <source>
        <strain>PEST</strain>
    </source>
</reference>
<gene>
    <name evidence="1" type="primary">lig</name>
    <name type="ORF">AGAP004817</name>
</gene>
<dbReference type="EMBL" id="AAAB01008968">
    <property type="protein sequence ID" value="EAA13251.5"/>
    <property type="molecule type" value="Genomic_DNA"/>
</dbReference>
<dbReference type="RefSeq" id="XP_317993.4">
    <property type="nucleotide sequence ID" value="XM_317993.4"/>
</dbReference>
<dbReference type="SMR" id="Q7PMS9"/>
<dbReference type="FunCoup" id="Q7PMS9">
    <property type="interactions" value="2334"/>
</dbReference>
<dbReference type="STRING" id="7165.Q7PMS9"/>
<dbReference type="PaxDb" id="7165-AGAP004817-PA"/>
<dbReference type="VEuPathDB" id="VectorBase:AGAMI1_010795"/>
<dbReference type="VEuPathDB" id="VectorBase:AGAP004817"/>
<dbReference type="eggNOG" id="ENOG502QPRH">
    <property type="taxonomic scope" value="Eukaryota"/>
</dbReference>
<dbReference type="HOGENOM" id="CLU_005969_0_0_1"/>
<dbReference type="InParanoid" id="Q7PMS9"/>
<dbReference type="OMA" id="TYSSGIM"/>
<dbReference type="PhylomeDB" id="Q7PMS9"/>
<dbReference type="Proteomes" id="UP000007062">
    <property type="component" value="Chromosome 2L"/>
</dbReference>
<dbReference type="GO" id="GO:0005737">
    <property type="term" value="C:cytoplasm"/>
    <property type="evidence" value="ECO:0000250"/>
    <property type="project" value="UniProtKB"/>
</dbReference>
<dbReference type="GO" id="GO:0005634">
    <property type="term" value="C:nucleus"/>
    <property type="evidence" value="ECO:0000318"/>
    <property type="project" value="GO_Central"/>
</dbReference>
<dbReference type="GO" id="GO:0007620">
    <property type="term" value="P:copulation"/>
    <property type="evidence" value="ECO:0000250"/>
    <property type="project" value="UniProtKB"/>
</dbReference>
<dbReference type="CDD" id="cd14277">
    <property type="entry name" value="UBA_UBP2_like"/>
    <property type="match status" value="1"/>
</dbReference>
<dbReference type="FunFam" id="1.10.8.10:FF:000059">
    <property type="entry name" value="Lingerer, isoform I"/>
    <property type="match status" value="1"/>
</dbReference>
<dbReference type="Gene3D" id="1.10.8.10">
    <property type="entry name" value="DNA helicase RuvA subunit, C-terminal domain"/>
    <property type="match status" value="1"/>
</dbReference>
<dbReference type="InterPro" id="IPR051833">
    <property type="entry name" value="TC-DDR_regulator"/>
</dbReference>
<dbReference type="InterPro" id="IPR009060">
    <property type="entry name" value="UBA-like_sf"/>
</dbReference>
<dbReference type="InterPro" id="IPR022166">
    <property type="entry name" value="UBAP2/Lig"/>
</dbReference>
<dbReference type="PANTHER" id="PTHR16308:SF13">
    <property type="entry name" value="PROTEIN LINGERER"/>
    <property type="match status" value="1"/>
</dbReference>
<dbReference type="PANTHER" id="PTHR16308">
    <property type="entry name" value="UBIQUITIN ASSOCIATED PROTEIN 2-LIKE/LINGERER"/>
    <property type="match status" value="1"/>
</dbReference>
<dbReference type="Pfam" id="PF12478">
    <property type="entry name" value="UBAP2-Lig"/>
    <property type="match status" value="1"/>
</dbReference>
<dbReference type="SUPFAM" id="SSF46934">
    <property type="entry name" value="UBA-like"/>
    <property type="match status" value="1"/>
</dbReference>